<dbReference type="EC" id="2.3.1.274" evidence="1"/>
<dbReference type="EMBL" id="CP000644">
    <property type="protein sequence ID" value="ABO90124.1"/>
    <property type="molecule type" value="Genomic_DNA"/>
</dbReference>
<dbReference type="RefSeq" id="WP_011898705.1">
    <property type="nucleotide sequence ID" value="NC_009348.1"/>
</dbReference>
<dbReference type="SMR" id="A4SMK2"/>
<dbReference type="STRING" id="29491.GCA_000820065_00668"/>
<dbReference type="GeneID" id="79879901"/>
<dbReference type="KEGG" id="asa:ASA_2057"/>
<dbReference type="eggNOG" id="COG0416">
    <property type="taxonomic scope" value="Bacteria"/>
</dbReference>
<dbReference type="HOGENOM" id="CLU_039379_1_0_6"/>
<dbReference type="UniPathway" id="UPA00085"/>
<dbReference type="Proteomes" id="UP000000225">
    <property type="component" value="Chromosome"/>
</dbReference>
<dbReference type="GO" id="GO:0005737">
    <property type="term" value="C:cytoplasm"/>
    <property type="evidence" value="ECO:0007669"/>
    <property type="project" value="UniProtKB-SubCell"/>
</dbReference>
<dbReference type="GO" id="GO:0043811">
    <property type="term" value="F:phosphate:acyl-[acyl carrier protein] acyltransferase activity"/>
    <property type="evidence" value="ECO:0007669"/>
    <property type="project" value="UniProtKB-UniRule"/>
</dbReference>
<dbReference type="GO" id="GO:0006633">
    <property type="term" value="P:fatty acid biosynthetic process"/>
    <property type="evidence" value="ECO:0007669"/>
    <property type="project" value="UniProtKB-UniRule"/>
</dbReference>
<dbReference type="GO" id="GO:0008654">
    <property type="term" value="P:phospholipid biosynthetic process"/>
    <property type="evidence" value="ECO:0007669"/>
    <property type="project" value="UniProtKB-KW"/>
</dbReference>
<dbReference type="Gene3D" id="3.40.718.10">
    <property type="entry name" value="Isopropylmalate Dehydrogenase"/>
    <property type="match status" value="1"/>
</dbReference>
<dbReference type="HAMAP" id="MF_00019">
    <property type="entry name" value="PlsX"/>
    <property type="match status" value="1"/>
</dbReference>
<dbReference type="InterPro" id="IPR003664">
    <property type="entry name" value="FA_synthesis"/>
</dbReference>
<dbReference type="InterPro" id="IPR012281">
    <property type="entry name" value="Phospholipid_synth_PlsX-like"/>
</dbReference>
<dbReference type="NCBIfam" id="TIGR00182">
    <property type="entry name" value="plsX"/>
    <property type="match status" value="1"/>
</dbReference>
<dbReference type="PANTHER" id="PTHR30100">
    <property type="entry name" value="FATTY ACID/PHOSPHOLIPID SYNTHESIS PROTEIN PLSX"/>
    <property type="match status" value="1"/>
</dbReference>
<dbReference type="PANTHER" id="PTHR30100:SF1">
    <property type="entry name" value="PHOSPHATE ACYLTRANSFERASE"/>
    <property type="match status" value="1"/>
</dbReference>
<dbReference type="Pfam" id="PF02504">
    <property type="entry name" value="FA_synthesis"/>
    <property type="match status" value="1"/>
</dbReference>
<dbReference type="PIRSF" id="PIRSF002465">
    <property type="entry name" value="Phsphlp_syn_PlsX"/>
    <property type="match status" value="1"/>
</dbReference>
<dbReference type="SUPFAM" id="SSF53659">
    <property type="entry name" value="Isocitrate/Isopropylmalate dehydrogenase-like"/>
    <property type="match status" value="1"/>
</dbReference>
<evidence type="ECO:0000255" key="1">
    <source>
        <dbReference type="HAMAP-Rule" id="MF_00019"/>
    </source>
</evidence>
<organism>
    <name type="scientific">Aeromonas salmonicida (strain A449)</name>
    <dbReference type="NCBI Taxonomy" id="382245"/>
    <lineage>
        <taxon>Bacteria</taxon>
        <taxon>Pseudomonadati</taxon>
        <taxon>Pseudomonadota</taxon>
        <taxon>Gammaproteobacteria</taxon>
        <taxon>Aeromonadales</taxon>
        <taxon>Aeromonadaceae</taxon>
        <taxon>Aeromonas</taxon>
    </lineage>
</organism>
<keyword id="KW-0963">Cytoplasm</keyword>
<keyword id="KW-0444">Lipid biosynthesis</keyword>
<keyword id="KW-0443">Lipid metabolism</keyword>
<keyword id="KW-0594">Phospholipid biosynthesis</keyword>
<keyword id="KW-1208">Phospholipid metabolism</keyword>
<keyword id="KW-0808">Transferase</keyword>
<protein>
    <recommendedName>
        <fullName evidence="1">Phosphate acyltransferase</fullName>
        <ecNumber evidence="1">2.3.1.274</ecNumber>
    </recommendedName>
    <alternativeName>
        <fullName evidence="1">Acyl-ACP phosphotransacylase</fullName>
    </alternativeName>
    <alternativeName>
        <fullName evidence="1">Acyl-[acyl-carrier-protein]--phosphate acyltransferase</fullName>
    </alternativeName>
    <alternativeName>
        <fullName evidence="1">Phosphate-acyl-ACP acyltransferase</fullName>
    </alternativeName>
</protein>
<comment type="function">
    <text evidence="1">Catalyzes the reversible formation of acyl-phosphate (acyl-PO(4)) from acyl-[acyl-carrier-protein] (acyl-ACP). This enzyme utilizes acyl-ACP as fatty acyl donor, but not acyl-CoA.</text>
</comment>
<comment type="catalytic activity">
    <reaction evidence="1">
        <text>a fatty acyl-[ACP] + phosphate = an acyl phosphate + holo-[ACP]</text>
        <dbReference type="Rhea" id="RHEA:42292"/>
        <dbReference type="Rhea" id="RHEA-COMP:9685"/>
        <dbReference type="Rhea" id="RHEA-COMP:14125"/>
        <dbReference type="ChEBI" id="CHEBI:43474"/>
        <dbReference type="ChEBI" id="CHEBI:59918"/>
        <dbReference type="ChEBI" id="CHEBI:64479"/>
        <dbReference type="ChEBI" id="CHEBI:138651"/>
        <dbReference type="EC" id="2.3.1.274"/>
    </reaction>
</comment>
<comment type="pathway">
    <text evidence="1">Lipid metabolism; phospholipid metabolism.</text>
</comment>
<comment type="subunit">
    <text evidence="1">Homodimer. Probably interacts with PlsY.</text>
</comment>
<comment type="subcellular location">
    <subcellularLocation>
        <location evidence="1">Cytoplasm</location>
    </subcellularLocation>
    <text evidence="1">Associated with the membrane possibly through PlsY.</text>
</comment>
<comment type="similarity">
    <text evidence="1">Belongs to the PlsX family.</text>
</comment>
<proteinExistence type="inferred from homology"/>
<accession>A4SMK2</accession>
<gene>
    <name evidence="1" type="primary">plsX</name>
    <name type="ordered locus">ASA_2057</name>
</gene>
<name>PLSX_AERS4</name>
<sequence>MSTQTVALDIMGGDIGPSETVPAVVQALSLLPQLKLILVGDQHQTTALLQQHGLLTHPRVRFVHASQVVGMGDKPIVALRTLKDSSMRVVLNLVKAGEADACVSAGNTGALMAMAKCVLKSLPGVDRPALIKALPTLSGKRTVMLDLGANVSCDADTLLQFAVMGSVVAEKVEGIASPRVALLNVGEEEIKGNDLVRHSAELLRQCSALNFVGFVEGDRIFSGECDVIVCDGFVGNVALKTAEGVVRMMAQLAGYPRKKRSFLGRLAGFMFKRRFSYLNPDQYNGASLLGLRGIVVKSHGRAERHALCNAILLAAQEAKHQLPLQIADRLESVFSDRDL</sequence>
<reference key="1">
    <citation type="journal article" date="2008" name="BMC Genomics">
        <title>The genome of Aeromonas salmonicida subsp. salmonicida A449: insights into the evolution of a fish pathogen.</title>
        <authorList>
            <person name="Reith M.E."/>
            <person name="Singh R.K."/>
            <person name="Curtis B."/>
            <person name="Boyd J.M."/>
            <person name="Bouevitch A."/>
            <person name="Kimball J."/>
            <person name="Munholland J."/>
            <person name="Murphy C."/>
            <person name="Sarty D."/>
            <person name="Williams J."/>
            <person name="Nash J.H."/>
            <person name="Johnson S.C."/>
            <person name="Brown L.L."/>
        </authorList>
    </citation>
    <scope>NUCLEOTIDE SEQUENCE [LARGE SCALE GENOMIC DNA]</scope>
    <source>
        <strain>A449</strain>
    </source>
</reference>
<feature type="chain" id="PRO_1000001713" description="Phosphate acyltransferase">
    <location>
        <begin position="1"/>
        <end position="339"/>
    </location>
</feature>